<protein>
    <recommendedName>
        <fullName>Aphid transmission protein</fullName>
    </recommendedName>
    <alternativeName>
        <fullName>Atf</fullName>
    </alternativeName>
    <alternativeName>
        <fullName>Protein 2</fullName>
    </alternativeName>
</protein>
<evidence type="ECO:0000305" key="1"/>
<name>VAT_CAMVD</name>
<accession>P03550</accession>
<proteinExistence type="inferred from homology"/>
<reference key="1">
    <citation type="journal article" date="1982" name="Gene">
        <title>Nucleotide sequence of DNA from an altered-virulence isolate D/H of the cauliflower mosaic virus.</title>
        <authorList>
            <person name="Balazs E."/>
            <person name="Guilley H."/>
            <person name="Jonard G."/>
            <person name="Richards K."/>
        </authorList>
    </citation>
    <scope>NUCLEOTIDE SEQUENCE [GENOMIC DNA]</scope>
</reference>
<sequence length="159" mass="17787">MSITGQPHVYKKDTIIRLKPLSLNSNNRSYVFSSSKGNIQNIINHLNNLNKIVGRSLLGIWKINSYFGLSKDPSESKSKNPSVFNTAKTIFKSGGVDYSSQPKEIKSLLEAQNTRIKSLEKAIQSLDEKIEPEPLTKEEVKELKESINSIKEGLKNIIG</sequence>
<feature type="chain" id="PRO_0000222068" description="Aphid transmission protein">
    <location>
        <begin position="1"/>
        <end position="159"/>
    </location>
</feature>
<dbReference type="EMBL" id="M10376">
    <property type="protein sequence ID" value="AAA46346.1"/>
    <property type="molecule type" value="Genomic_DNA"/>
</dbReference>
<dbReference type="SMR" id="P03550"/>
<dbReference type="Proteomes" id="UP000008439">
    <property type="component" value="Genome"/>
</dbReference>
<dbReference type="InterPro" id="IPR004917">
    <property type="entry name" value="Caulimo_AT"/>
</dbReference>
<dbReference type="Pfam" id="PF03233">
    <property type="entry name" value="Cauli_AT"/>
    <property type="match status" value="1"/>
</dbReference>
<organismHost>
    <name type="scientific">Arabidopsis thaliana</name>
    <name type="common">Mouse-ear cress</name>
    <dbReference type="NCBI Taxonomy" id="3702"/>
</organismHost>
<organismHost>
    <name type="scientific">Brassica</name>
    <dbReference type="NCBI Taxonomy" id="3705"/>
</organismHost>
<organismHost>
    <name type="scientific">Raphanus</name>
    <dbReference type="NCBI Taxonomy" id="3725"/>
</organismHost>
<organism>
    <name type="scientific">Cauliflower mosaic virus (strain D/H)</name>
    <name type="common">CaMV</name>
    <dbReference type="NCBI Taxonomy" id="10645"/>
    <lineage>
        <taxon>Viruses</taxon>
        <taxon>Riboviria</taxon>
        <taxon>Pararnavirae</taxon>
        <taxon>Artverviricota</taxon>
        <taxon>Revtraviricetes</taxon>
        <taxon>Ortervirales</taxon>
        <taxon>Caulimoviridae</taxon>
        <taxon>Caulimovirus</taxon>
        <taxon>Caulimovirus tessellobrassicae</taxon>
    </lineage>
</organism>
<gene>
    <name type="ORF">ORF II</name>
</gene>
<comment type="function">
    <text>This protein is involved in virus transmission.</text>
</comment>
<comment type="similarity">
    <text evidence="1">Belongs to the caulimoviridae ORF II family.</text>
</comment>